<dbReference type="EC" id="2.7.7.6" evidence="1"/>
<dbReference type="EMBL" id="AM233362">
    <property type="protein sequence ID" value="CAJ79972.1"/>
    <property type="molecule type" value="Genomic_DNA"/>
</dbReference>
<dbReference type="RefSeq" id="WP_003016869.1">
    <property type="nucleotide sequence ID" value="NZ_CP009694.1"/>
</dbReference>
<dbReference type="PDB" id="6WMP">
    <property type="method" value="EM"/>
    <property type="resolution" value="2.98 A"/>
    <property type="chains" value="E=1-72"/>
</dbReference>
<dbReference type="PDB" id="6WMR">
    <property type="method" value="EM"/>
    <property type="resolution" value="3.46 A"/>
    <property type="chains" value="E=1-72"/>
</dbReference>
<dbReference type="PDB" id="6WMT">
    <property type="method" value="EM"/>
    <property type="resolution" value="4.43 A"/>
    <property type="chains" value="E=1-72"/>
</dbReference>
<dbReference type="PDBsum" id="6WMP"/>
<dbReference type="PDBsum" id="6WMR"/>
<dbReference type="PDBsum" id="6WMT"/>
<dbReference type="EMDB" id="EMD-21850"/>
<dbReference type="EMDB" id="EMD-21851"/>
<dbReference type="EMDB" id="EMD-21852"/>
<dbReference type="SMR" id="Q2A273"/>
<dbReference type="KEGG" id="ftl:FTL_1533"/>
<dbReference type="Proteomes" id="UP000001944">
    <property type="component" value="Chromosome"/>
</dbReference>
<dbReference type="GO" id="GO:0000428">
    <property type="term" value="C:DNA-directed RNA polymerase complex"/>
    <property type="evidence" value="ECO:0007669"/>
    <property type="project" value="UniProtKB-KW"/>
</dbReference>
<dbReference type="GO" id="GO:0003677">
    <property type="term" value="F:DNA binding"/>
    <property type="evidence" value="ECO:0007669"/>
    <property type="project" value="UniProtKB-UniRule"/>
</dbReference>
<dbReference type="GO" id="GO:0003899">
    <property type="term" value="F:DNA-directed RNA polymerase activity"/>
    <property type="evidence" value="ECO:0007669"/>
    <property type="project" value="UniProtKB-UniRule"/>
</dbReference>
<dbReference type="GO" id="GO:0006351">
    <property type="term" value="P:DNA-templated transcription"/>
    <property type="evidence" value="ECO:0007669"/>
    <property type="project" value="UniProtKB-UniRule"/>
</dbReference>
<dbReference type="Gene3D" id="3.90.940.10">
    <property type="match status" value="1"/>
</dbReference>
<dbReference type="HAMAP" id="MF_00366">
    <property type="entry name" value="RNApol_bact_RpoZ"/>
    <property type="match status" value="1"/>
</dbReference>
<dbReference type="InterPro" id="IPR003716">
    <property type="entry name" value="DNA-dir_RNA_pol_omega"/>
</dbReference>
<dbReference type="InterPro" id="IPR006110">
    <property type="entry name" value="Pol_omega/Rpo6/RPB6"/>
</dbReference>
<dbReference type="InterPro" id="IPR036161">
    <property type="entry name" value="RPB6/omega-like_sf"/>
</dbReference>
<dbReference type="NCBIfam" id="TIGR00690">
    <property type="entry name" value="rpoZ"/>
    <property type="match status" value="1"/>
</dbReference>
<dbReference type="PANTHER" id="PTHR34476">
    <property type="entry name" value="DNA-DIRECTED RNA POLYMERASE SUBUNIT OMEGA"/>
    <property type="match status" value="1"/>
</dbReference>
<dbReference type="PANTHER" id="PTHR34476:SF1">
    <property type="entry name" value="DNA-DIRECTED RNA POLYMERASE SUBUNIT OMEGA"/>
    <property type="match status" value="1"/>
</dbReference>
<dbReference type="Pfam" id="PF01192">
    <property type="entry name" value="RNA_pol_Rpb6"/>
    <property type="match status" value="1"/>
</dbReference>
<dbReference type="SMART" id="SM01409">
    <property type="entry name" value="RNA_pol_Rpb6"/>
    <property type="match status" value="1"/>
</dbReference>
<dbReference type="SUPFAM" id="SSF63562">
    <property type="entry name" value="RPB6/omega subunit-like"/>
    <property type="match status" value="1"/>
</dbReference>
<name>RPOZ_FRATH</name>
<gene>
    <name evidence="1" type="primary">rpoZ</name>
    <name type="ordered locus">FTL_1533</name>
</gene>
<reference key="1">
    <citation type="submission" date="2006-03" db="EMBL/GenBank/DDBJ databases">
        <title>Complete genome sequence of Francisella tularensis LVS (Live Vaccine Strain).</title>
        <authorList>
            <person name="Chain P."/>
            <person name="Larimer F."/>
            <person name="Land M."/>
            <person name="Stilwagen S."/>
            <person name="Larsson P."/>
            <person name="Bearden S."/>
            <person name="Chu M."/>
            <person name="Oyston P."/>
            <person name="Forsman M."/>
            <person name="Andersson S."/>
            <person name="Lindler L."/>
            <person name="Titball R."/>
            <person name="Garcia E."/>
        </authorList>
    </citation>
    <scope>NUCLEOTIDE SEQUENCE [LARGE SCALE GENOMIC DNA]</scope>
    <source>
        <strain>LVS</strain>
    </source>
</reference>
<keyword id="KW-0002">3D-structure</keyword>
<keyword id="KW-0240">DNA-directed RNA polymerase</keyword>
<keyword id="KW-0548">Nucleotidyltransferase</keyword>
<keyword id="KW-1185">Reference proteome</keyword>
<keyword id="KW-0804">Transcription</keyword>
<keyword id="KW-0808">Transferase</keyword>
<evidence type="ECO:0000255" key="1">
    <source>
        <dbReference type="HAMAP-Rule" id="MF_00366"/>
    </source>
</evidence>
<evidence type="ECO:0007829" key="2">
    <source>
        <dbReference type="PDB" id="6WMP"/>
    </source>
</evidence>
<evidence type="ECO:0007829" key="3">
    <source>
        <dbReference type="PDB" id="6WMR"/>
    </source>
</evidence>
<comment type="function">
    <text evidence="1">Promotes RNA polymerase assembly. Latches the N- and C-terminal regions of the beta' subunit thereby facilitating its interaction with the beta and alpha subunits.</text>
</comment>
<comment type="catalytic activity">
    <reaction evidence="1">
        <text>RNA(n) + a ribonucleoside 5'-triphosphate = RNA(n+1) + diphosphate</text>
        <dbReference type="Rhea" id="RHEA:21248"/>
        <dbReference type="Rhea" id="RHEA-COMP:14527"/>
        <dbReference type="Rhea" id="RHEA-COMP:17342"/>
        <dbReference type="ChEBI" id="CHEBI:33019"/>
        <dbReference type="ChEBI" id="CHEBI:61557"/>
        <dbReference type="ChEBI" id="CHEBI:140395"/>
        <dbReference type="EC" id="2.7.7.6"/>
    </reaction>
</comment>
<comment type="subunit">
    <text evidence="1">The RNAP catalytic core consists of 2 alpha, 1 beta, 1 beta' and 1 omega subunit. When a sigma factor is associated with the core the holoenzyme is formed, which can initiate transcription.</text>
</comment>
<comment type="similarity">
    <text evidence="1">Belongs to the RNA polymerase subunit omega family.</text>
</comment>
<proteinExistence type="evidence at protein level"/>
<organism>
    <name type="scientific">Francisella tularensis subsp. holarctica (strain LVS)</name>
    <dbReference type="NCBI Taxonomy" id="376619"/>
    <lineage>
        <taxon>Bacteria</taxon>
        <taxon>Pseudomonadati</taxon>
        <taxon>Pseudomonadota</taxon>
        <taxon>Gammaproteobacteria</taxon>
        <taxon>Thiotrichales</taxon>
        <taxon>Francisellaceae</taxon>
        <taxon>Francisella</taxon>
    </lineage>
</organism>
<feature type="chain" id="PRO_1000005930" description="DNA-directed RNA polymerase subunit omega">
    <location>
        <begin position="1"/>
        <end position="72"/>
    </location>
</feature>
<feature type="helix" evidence="2">
    <location>
        <begin position="6"/>
        <end position="9"/>
    </location>
</feature>
<feature type="turn" evidence="2">
    <location>
        <begin position="10"/>
        <end position="12"/>
    </location>
</feature>
<feature type="turn" evidence="2">
    <location>
        <begin position="15"/>
        <end position="17"/>
    </location>
</feature>
<feature type="helix" evidence="2">
    <location>
        <begin position="18"/>
        <end position="31"/>
    </location>
</feature>
<feature type="strand" evidence="2">
    <location>
        <begin position="36"/>
        <end position="39"/>
    </location>
</feature>
<feature type="helix" evidence="2">
    <location>
        <begin position="41"/>
        <end position="43"/>
    </location>
</feature>
<feature type="helix" evidence="2">
    <location>
        <begin position="47"/>
        <end position="56"/>
    </location>
</feature>
<feature type="turn" evidence="2">
    <location>
        <begin position="63"/>
        <end position="66"/>
    </location>
</feature>
<feature type="turn" evidence="3">
    <location>
        <begin position="67"/>
        <end position="71"/>
    </location>
</feature>
<protein>
    <recommendedName>
        <fullName evidence="1">DNA-directed RNA polymerase subunit omega</fullName>
        <shortName evidence="1">RNAP omega subunit</shortName>
        <ecNumber evidence="1">2.7.7.6</ecNumber>
    </recommendedName>
    <alternativeName>
        <fullName evidence="1">RNA polymerase omega subunit</fullName>
    </alternativeName>
    <alternativeName>
        <fullName evidence="1">Transcriptase subunit omega</fullName>
    </alternativeName>
</protein>
<accession>Q2A273</accession>
<sequence>MARVTVEDCLDKVETRFDLVVLASMRANKILKNGYSESMENEKKEKATVVALREIAESEITSEQILRNEIEG</sequence>